<dbReference type="EC" id="3.1.1.4"/>
<dbReference type="EMBL" id="AB062441">
    <property type="protein sequence ID" value="BAB72248.1"/>
    <property type="molecule type" value="Genomic_DNA"/>
</dbReference>
<dbReference type="SMR" id="Q8UUI4"/>
<dbReference type="Proteomes" id="UP000694406">
    <property type="component" value="Unplaced"/>
</dbReference>
<dbReference type="GO" id="GO:0005576">
    <property type="term" value="C:extracellular region"/>
    <property type="evidence" value="ECO:0007669"/>
    <property type="project" value="UniProtKB-SubCell"/>
</dbReference>
<dbReference type="GO" id="GO:0005509">
    <property type="term" value="F:calcium ion binding"/>
    <property type="evidence" value="ECO:0007669"/>
    <property type="project" value="InterPro"/>
</dbReference>
<dbReference type="GO" id="GO:0047498">
    <property type="term" value="F:calcium-dependent phospholipase A2 activity"/>
    <property type="evidence" value="ECO:0007669"/>
    <property type="project" value="TreeGrafter"/>
</dbReference>
<dbReference type="GO" id="GO:0005543">
    <property type="term" value="F:phospholipid binding"/>
    <property type="evidence" value="ECO:0007669"/>
    <property type="project" value="TreeGrafter"/>
</dbReference>
<dbReference type="GO" id="GO:0050482">
    <property type="term" value="P:arachidonate secretion"/>
    <property type="evidence" value="ECO:0007669"/>
    <property type="project" value="InterPro"/>
</dbReference>
<dbReference type="GO" id="GO:0016042">
    <property type="term" value="P:lipid catabolic process"/>
    <property type="evidence" value="ECO:0007669"/>
    <property type="project" value="UniProtKB-KW"/>
</dbReference>
<dbReference type="GO" id="GO:0006644">
    <property type="term" value="P:phospholipid metabolic process"/>
    <property type="evidence" value="ECO:0007669"/>
    <property type="project" value="InterPro"/>
</dbReference>
<dbReference type="CDD" id="cd00125">
    <property type="entry name" value="PLA2c"/>
    <property type="match status" value="1"/>
</dbReference>
<dbReference type="FunFam" id="1.20.90.10:FF:000007">
    <property type="entry name" value="Acidic phospholipase A2"/>
    <property type="match status" value="1"/>
</dbReference>
<dbReference type="Gene3D" id="1.20.90.10">
    <property type="entry name" value="Phospholipase A2 domain"/>
    <property type="match status" value="1"/>
</dbReference>
<dbReference type="InterPro" id="IPR001211">
    <property type="entry name" value="PLipase_A2"/>
</dbReference>
<dbReference type="InterPro" id="IPR033112">
    <property type="entry name" value="PLipase_A2_Asp_AS"/>
</dbReference>
<dbReference type="InterPro" id="IPR016090">
    <property type="entry name" value="PLipase_A2_dom"/>
</dbReference>
<dbReference type="InterPro" id="IPR036444">
    <property type="entry name" value="PLipase_A2_dom_sf"/>
</dbReference>
<dbReference type="InterPro" id="IPR033113">
    <property type="entry name" value="PLipase_A2_His_AS"/>
</dbReference>
<dbReference type="PANTHER" id="PTHR11716:SF51">
    <property type="entry name" value="PHOSPHOLIPASE A2"/>
    <property type="match status" value="1"/>
</dbReference>
<dbReference type="PANTHER" id="PTHR11716">
    <property type="entry name" value="PHOSPHOLIPASE A2 FAMILY MEMBER"/>
    <property type="match status" value="1"/>
</dbReference>
<dbReference type="Pfam" id="PF00068">
    <property type="entry name" value="Phospholip_A2_1"/>
    <property type="match status" value="1"/>
</dbReference>
<dbReference type="PRINTS" id="PR00389">
    <property type="entry name" value="PHPHLIPASEA2"/>
</dbReference>
<dbReference type="SMART" id="SM00085">
    <property type="entry name" value="PA2c"/>
    <property type="match status" value="1"/>
</dbReference>
<dbReference type="SUPFAM" id="SSF48619">
    <property type="entry name" value="Phospholipase A2, PLA2"/>
    <property type="match status" value="1"/>
</dbReference>
<dbReference type="PROSITE" id="PS00119">
    <property type="entry name" value="PA2_ASP"/>
    <property type="match status" value="1"/>
</dbReference>
<dbReference type="PROSITE" id="PS00118">
    <property type="entry name" value="PA2_HIS"/>
    <property type="match status" value="1"/>
</dbReference>
<sequence length="145" mass="16244">MYPAHLLLLLAVCVSLLGASAIPPLPLNLAQFALVIKCADKGKRPRWHYMDYGCYCGPGGSGTPVDELDRCCKTHDECYAQAEKKGCYPKLTMYSYYCGGDGPYCNSKTECQRFVCDCDVRAADCFARYPYNNKNYNINTSKRCE</sequence>
<feature type="signal peptide" evidence="2">
    <location>
        <begin position="1"/>
        <end position="21"/>
    </location>
</feature>
<feature type="propeptide" id="PRO_0000022888" evidence="1">
    <location>
        <begin position="22"/>
        <end position="27"/>
    </location>
</feature>
<feature type="chain" id="PRO_0000022889" description="Basic phospholipase A2 PC10">
    <location>
        <begin position="28"/>
        <end position="145"/>
    </location>
</feature>
<feature type="active site" evidence="1">
    <location>
        <position position="75"/>
    </location>
</feature>
<feature type="active site" evidence="1">
    <location>
        <position position="119"/>
    </location>
</feature>
<feature type="binding site" evidence="1">
    <location>
        <position position="55"/>
    </location>
    <ligand>
        <name>Ca(2+)</name>
        <dbReference type="ChEBI" id="CHEBI:29108"/>
    </ligand>
</feature>
<feature type="binding site" evidence="1">
    <location>
        <position position="57"/>
    </location>
    <ligand>
        <name>Ca(2+)</name>
        <dbReference type="ChEBI" id="CHEBI:29108"/>
    </ligand>
</feature>
<feature type="binding site" evidence="1">
    <location>
        <position position="59"/>
    </location>
    <ligand>
        <name>Ca(2+)</name>
        <dbReference type="ChEBI" id="CHEBI:29108"/>
    </ligand>
</feature>
<feature type="binding site" evidence="1">
    <location>
        <position position="76"/>
    </location>
    <ligand>
        <name>Ca(2+)</name>
        <dbReference type="ChEBI" id="CHEBI:29108"/>
    </ligand>
</feature>
<feature type="disulfide bond" evidence="1">
    <location>
        <begin position="38"/>
        <end position="98"/>
    </location>
</feature>
<feature type="disulfide bond" evidence="1">
    <location>
        <begin position="54"/>
        <end position="144"/>
    </location>
</feature>
<feature type="disulfide bond" evidence="1">
    <location>
        <begin position="56"/>
        <end position="72"/>
    </location>
</feature>
<feature type="disulfide bond" evidence="1">
    <location>
        <begin position="71"/>
        <end position="125"/>
    </location>
</feature>
<feature type="disulfide bond" evidence="1">
    <location>
        <begin position="78"/>
        <end position="118"/>
    </location>
</feature>
<feature type="disulfide bond" evidence="1">
    <location>
        <begin position="87"/>
        <end position="111"/>
    </location>
</feature>
<feature type="disulfide bond" evidence="1">
    <location>
        <begin position="105"/>
        <end position="116"/>
    </location>
</feature>
<proteinExistence type="inferred from homology"/>
<comment type="function">
    <text evidence="1">PLA2 catalyzes the calcium-dependent hydrolysis of the 2-acyl groups in 3-sn-phosphoglycerides.</text>
</comment>
<comment type="catalytic activity">
    <reaction evidence="3 4">
        <text>a 1,2-diacyl-sn-glycero-3-phosphocholine + H2O = a 1-acyl-sn-glycero-3-phosphocholine + a fatty acid + H(+)</text>
        <dbReference type="Rhea" id="RHEA:15801"/>
        <dbReference type="ChEBI" id="CHEBI:15377"/>
        <dbReference type="ChEBI" id="CHEBI:15378"/>
        <dbReference type="ChEBI" id="CHEBI:28868"/>
        <dbReference type="ChEBI" id="CHEBI:57643"/>
        <dbReference type="ChEBI" id="CHEBI:58168"/>
        <dbReference type="EC" id="3.1.1.4"/>
    </reaction>
</comment>
<comment type="cofactor">
    <cofactor evidence="1">
        <name>Ca(2+)</name>
        <dbReference type="ChEBI" id="CHEBI:29108"/>
    </cofactor>
    <text evidence="1">Binds 1 Ca(2+) ion.</text>
</comment>
<comment type="subcellular location">
    <subcellularLocation>
        <location evidence="1">Secreted</location>
    </subcellularLocation>
</comment>
<comment type="similarity">
    <text evidence="5">Belongs to the phospholipase A2 family. Group I subfamily. D49 sub-subfamily.</text>
</comment>
<keyword id="KW-0106">Calcium</keyword>
<keyword id="KW-1015">Disulfide bond</keyword>
<keyword id="KW-0378">Hydrolase</keyword>
<keyword id="KW-0442">Lipid degradation</keyword>
<keyword id="KW-0443">Lipid metabolism</keyword>
<keyword id="KW-0479">Metal-binding</keyword>
<keyword id="KW-1185">Reference proteome</keyword>
<keyword id="KW-0964">Secreted</keyword>
<keyword id="KW-0732">Signal</keyword>
<evidence type="ECO:0000250" key="1"/>
<evidence type="ECO:0000255" key="2"/>
<evidence type="ECO:0000255" key="3">
    <source>
        <dbReference type="PROSITE-ProRule" id="PRU10035"/>
    </source>
</evidence>
<evidence type="ECO:0000255" key="4">
    <source>
        <dbReference type="PROSITE-ProRule" id="PRU10036"/>
    </source>
</evidence>
<evidence type="ECO:0000305" key="5"/>
<reference key="1">
    <citation type="journal article" date="2002" name="Toxicon">
        <title>A comparative analysis of invaded sequences from group IA phospholipase A(2) genes provides evidence about the divergence period of genes groups and snake families.</title>
        <authorList>
            <person name="Fujimi T.J."/>
            <person name="Tsuchiya T."/>
            <person name="Tamiya T."/>
        </authorList>
    </citation>
    <scope>NUCLEOTIDE SEQUENCE [GENOMIC DNA]</scope>
    <source>
        <tissue>Liver</tissue>
    </source>
</reference>
<protein>
    <recommendedName>
        <fullName>Basic phospholipase A2 PC10</fullName>
        <shortName>svPLA2</shortName>
        <ecNumber>3.1.1.4</ecNumber>
    </recommendedName>
    <alternativeName>
        <fullName>Phosphatidylcholine 2-acylhydrolase</fullName>
    </alternativeName>
</protein>
<name>PA2BA_LATLA</name>
<accession>Q8UUI4</accession>
<organism>
    <name type="scientific">Laticauda laticaudata</name>
    <name type="common">Blue-ringed sea krait</name>
    <name type="synonym">Blue-lipped sea krait</name>
    <dbReference type="NCBI Taxonomy" id="8630"/>
    <lineage>
        <taxon>Eukaryota</taxon>
        <taxon>Metazoa</taxon>
        <taxon>Chordata</taxon>
        <taxon>Craniata</taxon>
        <taxon>Vertebrata</taxon>
        <taxon>Euteleostomi</taxon>
        <taxon>Lepidosauria</taxon>
        <taxon>Squamata</taxon>
        <taxon>Bifurcata</taxon>
        <taxon>Unidentata</taxon>
        <taxon>Episquamata</taxon>
        <taxon>Toxicofera</taxon>
        <taxon>Serpentes</taxon>
        <taxon>Colubroidea</taxon>
        <taxon>Elapidae</taxon>
        <taxon>Laticaudinae</taxon>
        <taxon>Laticauda</taxon>
    </lineage>
</organism>